<feature type="chain" id="PRO_0000218450" description="Probable metalloendopeptidase G1-type">
    <location>
        <begin position="1"/>
        <end position="590"/>
    </location>
</feature>
<feature type="active site" evidence="2">
    <location>
        <position position="44"/>
    </location>
</feature>
<feature type="binding site" evidence="2">
    <location>
        <position position="41"/>
    </location>
    <ligand>
        <name>Zn(2+)</name>
        <dbReference type="ChEBI" id="CHEBI:29105"/>
        <note>catalytic</note>
    </ligand>
</feature>
<feature type="binding site" evidence="2">
    <location>
        <position position="45"/>
    </location>
    <ligand>
        <name>Zn(2+)</name>
        <dbReference type="ChEBI" id="CHEBI:29105"/>
        <note>catalytic</note>
    </ligand>
</feature>
<comment type="function">
    <text evidence="1">Seems to be involved in viral proteins maturation by cleavage at Ala-Gly-|-Xaa motifs.</text>
</comment>
<comment type="cofactor">
    <cofactor evidence="3">
        <name>Zn(2+)</name>
        <dbReference type="ChEBI" id="CHEBI:29105"/>
    </cofactor>
    <text evidence="3">Binds 1 zinc ion.</text>
</comment>
<comment type="similarity">
    <text evidence="3">Belongs to the peptidase M44 family.</text>
</comment>
<name>PG085_MYXVL</name>
<proteinExistence type="inferred from homology"/>
<organismHost>
    <name type="scientific">Oryctolagus cuniculus</name>
    <name type="common">Rabbit</name>
    <dbReference type="NCBI Taxonomy" id="9986"/>
</organismHost>
<protein>
    <recommendedName>
        <fullName>Probable metalloendopeptidase G1-type</fullName>
        <ecNumber>3.4.24.-</ecNumber>
    </recommendedName>
</protein>
<dbReference type="EC" id="3.4.24.-"/>
<dbReference type="EMBL" id="AF170726">
    <property type="protein sequence ID" value="AAF14933.1"/>
    <property type="molecule type" value="Genomic_DNA"/>
</dbReference>
<dbReference type="RefSeq" id="NP_051759.1">
    <property type="nucleotide sequence ID" value="NC_001132.2"/>
</dbReference>
<dbReference type="SMR" id="Q9Q8Q1"/>
<dbReference type="MEROPS" id="M44.001"/>
<dbReference type="GeneID" id="932107"/>
<dbReference type="KEGG" id="vg:932107"/>
<dbReference type="Proteomes" id="UP000000867">
    <property type="component" value="Segment"/>
</dbReference>
<dbReference type="GO" id="GO:0004222">
    <property type="term" value="F:metalloendopeptidase activity"/>
    <property type="evidence" value="ECO:0007669"/>
    <property type="project" value="InterPro"/>
</dbReference>
<dbReference type="GO" id="GO:0008270">
    <property type="term" value="F:zinc ion binding"/>
    <property type="evidence" value="ECO:0007669"/>
    <property type="project" value="InterPro"/>
</dbReference>
<dbReference type="GO" id="GO:0006508">
    <property type="term" value="P:proteolysis"/>
    <property type="evidence" value="ECO:0007669"/>
    <property type="project" value="UniProtKB-KW"/>
</dbReference>
<dbReference type="GO" id="GO:0019058">
    <property type="term" value="P:viral life cycle"/>
    <property type="evidence" value="ECO:0007669"/>
    <property type="project" value="InterPro"/>
</dbReference>
<dbReference type="InterPro" id="IPR011249">
    <property type="entry name" value="Metalloenz_LuxS/M16"/>
</dbReference>
<dbReference type="InterPro" id="IPR005072">
    <property type="entry name" value="Peptidase_M44"/>
</dbReference>
<dbReference type="Pfam" id="PF03410">
    <property type="entry name" value="Peptidase_M44"/>
    <property type="match status" value="1"/>
</dbReference>
<dbReference type="PIRSF" id="PIRSF015679">
    <property type="entry name" value="Peptidase_M44"/>
    <property type="match status" value="1"/>
</dbReference>
<dbReference type="SUPFAM" id="SSF63411">
    <property type="entry name" value="LuxS/MPP-like metallohydrolase"/>
    <property type="match status" value="1"/>
</dbReference>
<keyword id="KW-0378">Hydrolase</keyword>
<keyword id="KW-0479">Metal-binding</keyword>
<keyword id="KW-0482">Metalloprotease</keyword>
<keyword id="KW-0645">Protease</keyword>
<keyword id="KW-1185">Reference proteome</keyword>
<keyword id="KW-0862">Zinc</keyword>
<gene>
    <name type="ordered locus">m045L</name>
</gene>
<evidence type="ECO:0000250" key="1"/>
<evidence type="ECO:0000255" key="2"/>
<evidence type="ECO:0000305" key="3"/>
<reference key="1">
    <citation type="journal article" date="1999" name="Virology">
        <title>The complete DNA sequence of myxoma virus.</title>
        <authorList>
            <person name="Cameron C."/>
            <person name="Hota-Mitchell S."/>
            <person name="Chen L."/>
            <person name="Barrett J.W."/>
            <person name="Cao J.-X."/>
            <person name="Macaulay C."/>
            <person name="Willer D.O."/>
            <person name="Evans D.H."/>
            <person name="McFadden G."/>
        </authorList>
    </citation>
    <scope>NUCLEOTIDE SEQUENCE [LARGE SCALE GENOMIC DNA]</scope>
</reference>
<accession>Q9Q8Q1</accession>
<organism>
    <name type="scientific">Myxoma virus (strain Lausanne)</name>
    <name type="common">MYXV</name>
    <dbReference type="NCBI Taxonomy" id="31530"/>
    <lineage>
        <taxon>Viruses</taxon>
        <taxon>Varidnaviria</taxon>
        <taxon>Bamfordvirae</taxon>
        <taxon>Nucleocytoviricota</taxon>
        <taxon>Pokkesviricetes</taxon>
        <taxon>Chitovirales</taxon>
        <taxon>Poxviridae</taxon>
        <taxon>Chordopoxvirinae</taxon>
        <taxon>Leporipoxvirus</taxon>
        <taxon>Myxoma virus</taxon>
    </lineage>
</organism>
<sequence>MIVFDNGTRVFINSSTNKDIYVGFSGFGFEKDIGGILGIAHLLEHILISFDASRFVANASTARSYMSFWCTPIRGRATSVDAVRTLISWFFDKDGLKDDFPVSKIKYHIKELENEYYFRNEVFHCMDALTFLANGDLYNGGRLSMLDRLEDIPLILRDRMRTIIGPNVVIFVRELNDVVLSLLANTFGRLPACPLTIPCTVRTIIGGKTIMMPSPFYTVMVRVEPSLHNILSILCLYEIYHLVDYETVDNKLYVTFSFIHEHDYERFLQGSGRLNLTIYKKIRLCYGDDFLMNVYLSFPCIRHDIFDYLTIVNTDTSSMISSLERDIYQSVRTGDYIVVYPNFSNTMSNTADRQLHKTVVINPNIVYASQPTTSIDLMKKQTHNEMYIKYSDAGFIDYVQLALGLRRKIHKHVHGIHIRHQFSADDIKTILESDTFMKYSKSKPAAMYQYLILSFFVSGNTIEDILQHRESVVKLCRTYKNKIVLGKQTRYDIQTLSSFVCGIFKGPSVTSEYLTDIMWKLKRKGLIYSLEFVELQKNMFYLFMFTIYPEDVTTYLSSRKLFTSRCVVVSKKGNTEDFSSMKKDIIIKLR</sequence>